<protein>
    <recommendedName>
        <fullName evidence="3">Exostosin-1</fullName>
        <ecNumber evidence="1">2.4.1.225</ecNumber>
    </recommendedName>
    <alternativeName>
        <fullName evidence="1">N-acetylglucosaminyl-proteoglycan 4-beta-glucuronosyltransferase</fullName>
    </alternativeName>
</protein>
<gene>
    <name type="primary">EXT1</name>
</gene>
<reference key="1">
    <citation type="submission" date="2007-12" db="EMBL/GenBank/DDBJ databases">
        <title>NISC comparative sequencing initiative.</title>
        <authorList>
            <person name="Antonellis A."/>
            <person name="Benjamin B."/>
            <person name="Blakesley R.W."/>
            <person name="Bouffard G.G."/>
            <person name="Brinkley C."/>
            <person name="Brooks S."/>
            <person name="Chu G."/>
            <person name="Chub I."/>
            <person name="Coleman H."/>
            <person name="Fuksenko T."/>
            <person name="Gestole M."/>
            <person name="Gregory M."/>
            <person name="Guan X."/>
            <person name="Gupta J."/>
            <person name="Gurson N."/>
            <person name="Han E."/>
            <person name="Han J."/>
            <person name="Hansen N."/>
            <person name="Hargrove A."/>
            <person name="Hines-Harris K."/>
            <person name="Ho S.-L."/>
            <person name="Hu P."/>
            <person name="Hunter G."/>
            <person name="Hurle B."/>
            <person name="Idol J.R."/>
            <person name="Johnson T."/>
            <person name="Knight E."/>
            <person name="Kwong P."/>
            <person name="Lee-Lin S.-Q."/>
            <person name="Legaspi R."/>
            <person name="Madden M."/>
            <person name="Maduro Q.L."/>
            <person name="Maduro V.B."/>
            <person name="Margulies E.H."/>
            <person name="Masiello C."/>
            <person name="Maskeri B."/>
            <person name="McDowell J."/>
            <person name="Merkulov G."/>
            <person name="Montemayor C."/>
            <person name="Mullikin J.C."/>
            <person name="Park M."/>
            <person name="Prasad A."/>
            <person name="Ramsahoye C."/>
            <person name="Reddix-Dugue N."/>
            <person name="Riebow N."/>
            <person name="Schandler K."/>
            <person name="Schueler M.G."/>
            <person name="Sison C."/>
            <person name="Smith L."/>
            <person name="Stantripop S."/>
            <person name="Thomas J.W."/>
            <person name="Thomas P.J."/>
            <person name="Tsipouri V."/>
            <person name="Young A."/>
            <person name="Green E.D."/>
        </authorList>
    </citation>
    <scope>NUCLEOTIDE SEQUENCE [LARGE SCALE GENOMIC DNA]</scope>
</reference>
<sequence length="746" mass="86269">MQAKKRYFILLSAGSCLALLFYFGGLQFRASRSHSRREEHSGRNGLHHPSPDHFWPRFPDALRPFVPWDQLENEDSSVHISPRQKRDANSSIYKGKKCRMESCFDFTLCKKNGFKVYVYPQQKGEKIAESYQNILAAIEGSRFYTSDPSQACLFVLSLDTLDRDQLSPQYVHNLRSKVQSLHLWNNGRNHLIFNLYSGTWPDYTEDVGFDIGQAMLAKASISTENFRPNFDVSIPLFSKDHPRTGGERGFLKFNTIPPLRKYMLVFKGKRYLTGIGSDTRNALYHVHNGEDVVLLTTCKHGKDWQKHKDSRCDRDNTEYEKYDYREMLHNATFCLVPRGRRLGSFRFLEALQAACVPVMLSNGWELPFSEVINWNQAAVIGDERLLLQIPSTIRSIHQDKILALRQQTQFLWEAYFSSVEKIVLTTLEIIQDRIFKHISRNSLIWNKHPGGLFVLPQYSSYLGDFPYYYANLGLKPPSKFTAVIHAVTPLVSQSQPVLKLLVAAAKSQYCAQIIVLWNCDKPLPAKHRWPATAVPVIVIEGESKVMSSRFLPYDNIITDAVLSLDEDTVLSTTEVDFAFTVWQSFPERIVGYPARSHFWDNSKERWGYTSKWTNDYSMVLTGAAIYHKYYHYLYSHYLPASLKNMVDQLANCEDILMNFLVSAVTKLPPIKVTQKKQYKETMMGQTSRASRWADPDHFAQRQSCMNTFASWFGYMPLIHSQMRLDPVLFKDQVSILRKKYRDIERL</sequence>
<keyword id="KW-1015">Disulfide bond</keyword>
<keyword id="KW-0256">Endoplasmic reticulum</keyword>
<keyword id="KW-0325">Glycoprotein</keyword>
<keyword id="KW-0328">Glycosyltransferase</keyword>
<keyword id="KW-0333">Golgi apparatus</keyword>
<keyword id="KW-0464">Manganese</keyword>
<keyword id="KW-0472">Membrane</keyword>
<keyword id="KW-0479">Metal-binding</keyword>
<keyword id="KW-1185">Reference proteome</keyword>
<keyword id="KW-0735">Signal-anchor</keyword>
<keyword id="KW-0808">Transferase</keyword>
<keyword id="KW-0812">Transmembrane</keyword>
<keyword id="KW-1133">Transmembrane helix</keyword>
<proteinExistence type="inferred from homology"/>
<comment type="function">
    <text evidence="1">Glycosyltransferase forming with EXT2 the heterodimeric heparan sulfate polymerase which catalyzes the elongation of the heparan sulfate glycan backbone. Glycan backbone extension consists in the alternating transfer of (1-&gt;4)-beta-D-GlcA and (1-&gt;4)-alpha-D-GlcNAc residues from their respective UDP-sugar donors. Both EXT1 and EXT2 are required for the full activity of the polymerase since EXT1 bears the N-acetylglucosaminyl-proteoglycan 4-beta-glucuronosyltransferase activity within the complex while EXT2 carries the glucuronosyl-N-acetylglucosaminyl-proteoglycan 4-alpha-N-acetylglucosaminyltransferase activity. Heparan sulfate proteoglycans are ubiquitous components of the extracellular matrix and play an important role in tissue homeostasis and signaling.</text>
</comment>
<comment type="catalytic activity">
    <reaction evidence="1">
        <text>3-O-{alpha-D-GlcNAc-[(1-&gt;4)-beta-D-GlcA-(1-&gt;4)-alpha-D-GlcNAc](n)-(1-&gt;4)-beta-D-GlcA-(1-&gt;3)-beta-D-Gal-(1-&gt;3)-beta-D-Gal-(1-&gt;4)-beta-D-Xyl}-L-seryl-[protein] + UDP-alpha-D-glucuronate = 3-O-{[(1-&gt;4)-beta-D-GlcA-(1-&gt;4)-alpha-D-GlcNAc](n+1)-(1-&gt;4)-beta-D-GlcA-(1-&gt;3)-beta-D-Gal-(1-&gt;3)-beta-D-Gal-(1-&gt;4)-beta-D-Xyl}-L-seryl-[protein] + UDP + H(+)</text>
        <dbReference type="Rhea" id="RHEA:20908"/>
        <dbReference type="Rhea" id="RHEA-COMP:12623"/>
        <dbReference type="Rhea" id="RHEA-COMP:14295"/>
        <dbReference type="ChEBI" id="CHEBI:15378"/>
        <dbReference type="ChEBI" id="CHEBI:58052"/>
        <dbReference type="ChEBI" id="CHEBI:58223"/>
        <dbReference type="ChEBI" id="CHEBI:132415"/>
        <dbReference type="ChEBI" id="CHEBI:132416"/>
        <dbReference type="EC" id="2.4.1.225"/>
    </reaction>
    <physiologicalReaction direction="left-to-right" evidence="1">
        <dbReference type="Rhea" id="RHEA:20909"/>
    </physiologicalReaction>
</comment>
<comment type="pathway">
    <text evidence="1">Protein modification; protein glycosylation.</text>
</comment>
<comment type="subunit">
    <text evidence="1">Part of the heparan sulfate polymerase, a dimeric complex composed of EXT1 and EXT2. Could also form homooligomeric complexes. Interacts with NDST1.</text>
</comment>
<comment type="subcellular location">
    <subcellularLocation>
        <location evidence="1">Golgi apparatus membrane</location>
        <topology evidence="2">Single-pass type II membrane protein</topology>
    </subcellularLocation>
    <subcellularLocation>
        <location evidence="1">Golgi apparatus</location>
        <location evidence="1">cis-Golgi network membrane</location>
        <topology evidence="2">Single-pass type II membrane protein</topology>
    </subcellularLocation>
    <subcellularLocation>
        <location evidence="1">Endoplasmic reticulum membrane</location>
        <topology evidence="2">Single-pass type II membrane protein</topology>
    </subcellularLocation>
    <text evidence="1">The active heparan sulfate polymerase complex composed of EXT1 and EXT2 is localized to the Golgi apparatus. If both proteins are individually detected in the endoplasmic reticulum, the formation of the complex promotes their transport to the Golgi.</text>
</comment>
<comment type="PTM">
    <text evidence="1">N-glycosylated.</text>
</comment>
<comment type="similarity">
    <text evidence="3">Belongs to the glycosyltransferase 47 family.</text>
</comment>
<dbReference type="EC" id="2.4.1.225" evidence="1"/>
<dbReference type="EMBL" id="DP000545">
    <property type="protein sequence ID" value="ABY40823.1"/>
    <property type="molecule type" value="Genomic_DNA"/>
</dbReference>
<dbReference type="RefSeq" id="NP_001162444.1">
    <property type="nucleotide sequence ID" value="NM_001168973.1"/>
</dbReference>
<dbReference type="SMR" id="A9X1C8"/>
<dbReference type="STRING" id="9555.ENSPANP00000015323"/>
<dbReference type="GlyCosmos" id="A9X1C8">
    <property type="glycosylation" value="2 sites, No reported glycans"/>
</dbReference>
<dbReference type="Ensembl" id="ENSPANT00000014513.3">
    <property type="protein sequence ID" value="ENSPANP00000015323.1"/>
    <property type="gene ID" value="ENSPANG00000007690.3"/>
</dbReference>
<dbReference type="GeneID" id="100137439"/>
<dbReference type="KEGG" id="panu:100137439"/>
<dbReference type="CTD" id="2131"/>
<dbReference type="eggNOG" id="KOG1021">
    <property type="taxonomic scope" value="Eukaryota"/>
</dbReference>
<dbReference type="GeneTree" id="ENSGT00940000155321"/>
<dbReference type="HOGENOM" id="CLU_013906_4_0_1"/>
<dbReference type="OMA" id="DARCNKD"/>
<dbReference type="OrthoDB" id="1912at314294"/>
<dbReference type="UniPathway" id="UPA00378"/>
<dbReference type="Proteomes" id="UP000028761">
    <property type="component" value="Chromosome 8"/>
</dbReference>
<dbReference type="Bgee" id="ENSPANG00000007690">
    <property type="expression patterns" value="Expressed in aorta and 64 other cell types or tissues"/>
</dbReference>
<dbReference type="GO" id="GO:1902494">
    <property type="term" value="C:catalytic complex"/>
    <property type="evidence" value="ECO:0000250"/>
    <property type="project" value="UniProtKB"/>
</dbReference>
<dbReference type="GO" id="GO:0005783">
    <property type="term" value="C:endoplasmic reticulum"/>
    <property type="evidence" value="ECO:0000250"/>
    <property type="project" value="UniProtKB"/>
</dbReference>
<dbReference type="GO" id="GO:0005789">
    <property type="term" value="C:endoplasmic reticulum membrane"/>
    <property type="evidence" value="ECO:0007669"/>
    <property type="project" value="UniProtKB-SubCell"/>
</dbReference>
<dbReference type="GO" id="GO:0005794">
    <property type="term" value="C:Golgi apparatus"/>
    <property type="evidence" value="ECO:0000250"/>
    <property type="project" value="UniProtKB"/>
</dbReference>
<dbReference type="GO" id="GO:0000139">
    <property type="term" value="C:Golgi membrane"/>
    <property type="evidence" value="ECO:0007669"/>
    <property type="project" value="UniProtKB-SubCell"/>
</dbReference>
<dbReference type="GO" id="GO:0050508">
    <property type="term" value="F:glucuronosyl-N-acetylglucosaminyl-proteoglycan 4-alpha-N-acetylglucosaminyltransferase activity"/>
    <property type="evidence" value="ECO:0007669"/>
    <property type="project" value="UniProtKB-EC"/>
</dbReference>
<dbReference type="GO" id="GO:0046872">
    <property type="term" value="F:metal ion binding"/>
    <property type="evidence" value="ECO:0007669"/>
    <property type="project" value="UniProtKB-KW"/>
</dbReference>
<dbReference type="GO" id="GO:0050509">
    <property type="term" value="F:N-acetylglucosaminyl-proteoglycan 4-beta-glucuronosyltransferase activity"/>
    <property type="evidence" value="ECO:0000250"/>
    <property type="project" value="UniProtKB"/>
</dbReference>
<dbReference type="GO" id="GO:0015012">
    <property type="term" value="P:heparan sulfate proteoglycan biosynthetic process"/>
    <property type="evidence" value="ECO:0000250"/>
    <property type="project" value="UniProtKB"/>
</dbReference>
<dbReference type="GO" id="GO:0006486">
    <property type="term" value="P:protein glycosylation"/>
    <property type="evidence" value="ECO:0007669"/>
    <property type="project" value="UniProtKB-UniPathway"/>
</dbReference>
<dbReference type="FunFam" id="3.90.550.10:FF:000034">
    <property type="entry name" value="Exostosin 1"/>
    <property type="match status" value="1"/>
</dbReference>
<dbReference type="Gene3D" id="3.90.550.10">
    <property type="entry name" value="Spore Coat Polysaccharide Biosynthesis Protein SpsA, Chain A"/>
    <property type="match status" value="1"/>
</dbReference>
<dbReference type="InterPro" id="IPR004263">
    <property type="entry name" value="Exostosin"/>
</dbReference>
<dbReference type="InterPro" id="IPR040911">
    <property type="entry name" value="Exostosin_GT47"/>
</dbReference>
<dbReference type="InterPro" id="IPR015338">
    <property type="entry name" value="GT64_dom"/>
</dbReference>
<dbReference type="InterPro" id="IPR029044">
    <property type="entry name" value="Nucleotide-diphossugar_trans"/>
</dbReference>
<dbReference type="PANTHER" id="PTHR48261">
    <property type="entry name" value="ACETYLGLUCOSAMINYLTRANSFERASE"/>
    <property type="match status" value="1"/>
</dbReference>
<dbReference type="PANTHER" id="PTHR48261:SF3">
    <property type="entry name" value="EXOSTOSIN GLYCOSYLTRANSFERASE 1"/>
    <property type="match status" value="1"/>
</dbReference>
<dbReference type="Pfam" id="PF03016">
    <property type="entry name" value="Exostosin_GT47"/>
    <property type="match status" value="1"/>
</dbReference>
<dbReference type="Pfam" id="PF09258">
    <property type="entry name" value="Glyco_transf_64"/>
    <property type="match status" value="1"/>
</dbReference>
<dbReference type="SUPFAM" id="SSF53448">
    <property type="entry name" value="Nucleotide-diphospho-sugar transferases"/>
    <property type="match status" value="1"/>
</dbReference>
<feature type="chain" id="PRO_0000366930" description="Exostosin-1">
    <location>
        <begin position="1"/>
        <end position="746"/>
    </location>
</feature>
<feature type="topological domain" description="Cytoplasmic" evidence="2">
    <location>
        <begin position="1"/>
        <end position="7"/>
    </location>
</feature>
<feature type="transmembrane region" description="Helical; Signal-anchor for type II membrane protein" evidence="2">
    <location>
        <begin position="8"/>
        <end position="28"/>
    </location>
</feature>
<feature type="topological domain" description="Lumenal" evidence="2">
    <location>
        <begin position="29"/>
        <end position="746"/>
    </location>
</feature>
<feature type="binding site" evidence="1">
    <location>
        <position position="166"/>
    </location>
    <ligand>
        <name>a protein</name>
        <dbReference type="ChEBI" id="CHEBI:16541"/>
    </ligand>
    <ligandPart>
        <name>O(3)-(N-acetyl-alpha-D-glucosaminyl-poly[(1-&gt;4)-beta-D-glucuronosyl-(1-&gt;4)-N-acetyl-alpha-D-glucosaminyl]-(1-&gt;4)-beta-D-glucuronosyl-(1-&gt;3)-beta-D-galactosyl-(1-&gt;3)-beta-D-galactosyl-(1-&gt;4)-beta-D-xylosyl)-L-serine residue</name>
        <dbReference type="ChEBI" id="CHEBI:132416"/>
    </ligandPart>
</feature>
<feature type="binding site" evidence="1">
    <location>
        <position position="203"/>
    </location>
    <ligand>
        <name>a protein</name>
        <dbReference type="ChEBI" id="CHEBI:16541"/>
    </ligand>
    <ligandPart>
        <name>O(3)-(N-acetyl-alpha-D-glucosaminyl-poly[(1-&gt;4)-beta-D-glucuronosyl-(1-&gt;4)-N-acetyl-alpha-D-glucosaminyl]-(1-&gt;4)-beta-D-glucuronosyl-(1-&gt;3)-beta-D-galactosyl-(1-&gt;3)-beta-D-galactosyl-(1-&gt;4)-beta-D-xylosyl)-L-serine residue</name>
        <dbReference type="ChEBI" id="CHEBI:132416"/>
    </ligandPart>
</feature>
<feature type="binding site" evidence="1">
    <location>
        <position position="267"/>
    </location>
    <ligand>
        <name>UDP</name>
        <dbReference type="ChEBI" id="CHEBI:58223"/>
    </ligand>
</feature>
<feature type="binding site" evidence="1">
    <location>
        <position position="269"/>
    </location>
    <ligand>
        <name>UDP</name>
        <dbReference type="ChEBI" id="CHEBI:58223"/>
    </ligand>
</feature>
<feature type="binding site" evidence="1">
    <location>
        <position position="271"/>
    </location>
    <ligand>
        <name>UDP</name>
        <dbReference type="ChEBI" id="CHEBI:58223"/>
    </ligand>
</feature>
<feature type="binding site" evidence="1">
    <location>
        <position position="280"/>
    </location>
    <ligand>
        <name>UDP</name>
        <dbReference type="ChEBI" id="CHEBI:58223"/>
    </ligand>
</feature>
<feature type="binding site" evidence="1">
    <location>
        <position position="300"/>
    </location>
    <ligand>
        <name>a protein</name>
        <dbReference type="ChEBI" id="CHEBI:16541"/>
    </ligand>
    <ligandPart>
        <name>O(3)-(N-acetyl-alpha-D-glucosaminyl-poly[(1-&gt;4)-beta-D-glucuronosyl-(1-&gt;4)-N-acetyl-alpha-D-glucosaminyl]-(1-&gt;4)-beta-D-glucuronosyl-(1-&gt;3)-beta-D-galactosyl-(1-&gt;3)-beta-D-galactosyl-(1-&gt;4)-beta-D-xylosyl)-L-serine residue</name>
        <dbReference type="ChEBI" id="CHEBI:132416"/>
    </ligandPart>
</feature>
<feature type="binding site" evidence="1">
    <location>
        <position position="319"/>
    </location>
    <ligand>
        <name>UDP</name>
        <dbReference type="ChEBI" id="CHEBI:58223"/>
    </ligand>
</feature>
<feature type="binding site" evidence="1">
    <location>
        <position position="324"/>
    </location>
    <ligand>
        <name>UDP</name>
        <dbReference type="ChEBI" id="CHEBI:58223"/>
    </ligand>
</feature>
<feature type="binding site" evidence="1">
    <location>
        <position position="346"/>
    </location>
    <ligand>
        <name>UDP</name>
        <dbReference type="ChEBI" id="CHEBI:58223"/>
    </ligand>
</feature>
<feature type="binding site" evidence="1">
    <location>
        <position position="349"/>
    </location>
    <ligand>
        <name>UDP</name>
        <dbReference type="ChEBI" id="CHEBI:58223"/>
    </ligand>
</feature>
<feature type="glycosylation site" description="N-linked (GlcNAc...) asparagine" evidence="2">
    <location>
        <position position="89"/>
    </location>
</feature>
<feature type="glycosylation site" description="N-linked (GlcNAc...) asparagine" evidence="1">
    <location>
        <position position="330"/>
    </location>
</feature>
<feature type="disulfide bond" evidence="1">
    <location>
        <begin position="98"/>
        <end position="103"/>
    </location>
</feature>
<feature type="disulfide bond" evidence="1">
    <location>
        <begin position="109"/>
        <end position="152"/>
    </location>
</feature>
<feature type="disulfide bond" evidence="1">
    <location>
        <begin position="298"/>
        <end position="312"/>
    </location>
</feature>
<feature type="disulfide bond" evidence="1">
    <location>
        <begin position="334"/>
        <end position="355"/>
    </location>
</feature>
<feature type="disulfide bond" evidence="1">
    <location>
        <begin position="652"/>
        <end position="704"/>
    </location>
</feature>
<name>EXT1_PAPAN</name>
<organism>
    <name type="scientific">Papio anubis</name>
    <name type="common">Olive baboon</name>
    <dbReference type="NCBI Taxonomy" id="9555"/>
    <lineage>
        <taxon>Eukaryota</taxon>
        <taxon>Metazoa</taxon>
        <taxon>Chordata</taxon>
        <taxon>Craniata</taxon>
        <taxon>Vertebrata</taxon>
        <taxon>Euteleostomi</taxon>
        <taxon>Mammalia</taxon>
        <taxon>Eutheria</taxon>
        <taxon>Euarchontoglires</taxon>
        <taxon>Primates</taxon>
        <taxon>Haplorrhini</taxon>
        <taxon>Catarrhini</taxon>
        <taxon>Cercopithecidae</taxon>
        <taxon>Cercopithecinae</taxon>
        <taxon>Papio</taxon>
    </lineage>
</organism>
<evidence type="ECO:0000250" key="1">
    <source>
        <dbReference type="UniProtKB" id="Q16394"/>
    </source>
</evidence>
<evidence type="ECO:0000255" key="2"/>
<evidence type="ECO:0000305" key="3"/>
<accession>A9X1C8</accession>